<sequence>MASLSRPSLPSCLCSFLLLLLLQVSSSYAGQFRVIGPRQPIRALVGDEVELPCRISPGKNATGMEVGWYRPPFSRVVHLYRNGRDQDGEQAPEYRGRTELLKDAIGEGKVTLRIRNVRFSDEGGFTCFFRDHSYQEEAAIELKVEDPFYWVSPAVLVLLAVLPVLLLQITVGLVFLCLQYRLRGKLRAEIENLHRTFDPHFLRVPCWKITLFVIVPVLGPLVALIICYNWLHRRLAGQFLEELRNPF</sequence>
<feature type="signal peptide" evidence="2">
    <location>
        <begin position="1"/>
        <end position="29"/>
    </location>
</feature>
<feature type="chain" id="PRO_0000274529" description="Myelin-oligodendrocyte glycoprotein">
    <location>
        <begin position="30"/>
        <end position="247"/>
    </location>
</feature>
<feature type="topological domain" description="Extracellular" evidence="2">
    <location>
        <begin position="30"/>
        <end position="154"/>
    </location>
</feature>
<feature type="transmembrane region" description="Helical" evidence="2">
    <location>
        <begin position="155"/>
        <end position="175"/>
    </location>
</feature>
<feature type="topological domain" description="Cytoplasmic" evidence="2">
    <location>
        <begin position="176"/>
        <end position="210"/>
    </location>
</feature>
<feature type="transmembrane region" description="Helical" evidence="2">
    <location>
        <begin position="211"/>
        <end position="231"/>
    </location>
</feature>
<feature type="topological domain" description="Extracellular" evidence="2">
    <location>
        <begin position="232"/>
        <end position="247"/>
    </location>
</feature>
<feature type="domain" description="Ig-like V-type">
    <location>
        <begin position="31"/>
        <end position="145"/>
    </location>
</feature>
<feature type="glycosylation site" description="N-linked (GlcNAc...) asparagine" evidence="2">
    <location>
        <position position="60"/>
    </location>
</feature>
<feature type="disulfide bond" evidence="3">
    <location>
        <begin position="53"/>
        <end position="127"/>
    </location>
</feature>
<feature type="splice variant" id="VSP_022790" description="In isoform 2." evidence="4">
    <original>RNPF</original>
    <variation>IFHLETLPG</variation>
    <location>
        <begin position="244"/>
        <end position="247"/>
    </location>
</feature>
<keyword id="KW-0025">Alternative splicing</keyword>
<keyword id="KW-0130">Cell adhesion</keyword>
<keyword id="KW-1015">Disulfide bond</keyword>
<keyword id="KW-0325">Glycoprotein</keyword>
<keyword id="KW-0393">Immunoglobulin domain</keyword>
<keyword id="KW-0472">Membrane</keyword>
<keyword id="KW-1185">Reference proteome</keyword>
<keyword id="KW-0732">Signal</keyword>
<keyword id="KW-0812">Transmembrane</keyword>
<keyword id="KW-1133">Transmembrane helix</keyword>
<comment type="function">
    <text evidence="1">Minor component of the myelin sheath. May be involved in completion and/or maintenance of the myelin sheath and in cell-cell communication. Mediates homophilic cell-cell adhesion (By similarity).</text>
</comment>
<comment type="subunit">
    <text evidence="1">Homodimer.</text>
</comment>
<comment type="subcellular location">
    <subcellularLocation>
        <location evidence="5">Membrane</location>
        <topology evidence="5">Multi-pass membrane protein</topology>
    </subcellularLocation>
</comment>
<comment type="alternative products">
    <event type="alternative splicing"/>
    <isoform>
        <id>Q9BGS7-1</id>
        <name>1</name>
        <sequence type="displayed"/>
    </isoform>
    <isoform>
        <id>Q9BGS7-2</id>
        <name>2</name>
        <sequence type="described" ref="VSP_022790"/>
    </isoform>
</comment>
<comment type="similarity">
    <text evidence="5">Belongs to the immunoglobulin superfamily. BTN/MOG family.</text>
</comment>
<comment type="caution">
    <text evidence="5">Do not confuse myelin-oligodendrocyte glycoprotein (MOG) with oligodendrocyte-myelin glycoprotein (OMG).</text>
</comment>
<dbReference type="EMBL" id="AF399846">
    <property type="protein sequence ID" value="AAQ03032.1"/>
    <property type="molecule type" value="mRNA"/>
</dbReference>
<dbReference type="EMBL" id="AY566843">
    <property type="protein sequence ID" value="AAU10108.1"/>
    <property type="molecule type" value="mRNA"/>
</dbReference>
<dbReference type="EMBL" id="AB056396">
    <property type="protein sequence ID" value="BAB33052.1"/>
    <property type="molecule type" value="mRNA"/>
</dbReference>
<dbReference type="RefSeq" id="NP_001271785.1">
    <property type="nucleotide sequence ID" value="NM_001284856.1"/>
</dbReference>
<dbReference type="RefSeq" id="XP_005553734.1">
    <molecule id="Q9BGS7-2"/>
    <property type="nucleotide sequence ID" value="XM_005553677.4"/>
</dbReference>
<dbReference type="RefSeq" id="XP_045246554.1">
    <molecule id="Q9BGS7-1"/>
    <property type="nucleotide sequence ID" value="XM_045390619.2"/>
</dbReference>
<dbReference type="SMR" id="Q9BGS7"/>
<dbReference type="STRING" id="9541.ENSMFAP00000001638"/>
<dbReference type="GlyCosmos" id="Q9BGS7">
    <property type="glycosylation" value="1 site, No reported glycans"/>
</dbReference>
<dbReference type="Ensembl" id="ENSMFAT00000000166.2">
    <molecule id="Q9BGS7-1"/>
    <property type="protein sequence ID" value="ENSMFAP00000001639.2"/>
    <property type="gene ID" value="ENSMFAG00000037244.2"/>
</dbReference>
<dbReference type="GeneID" id="102118842"/>
<dbReference type="KEGG" id="mcf:102118842"/>
<dbReference type="CTD" id="4340"/>
<dbReference type="VEuPathDB" id="HostDB:ENSMFAG00000037244"/>
<dbReference type="eggNOG" id="ENOG502SQC1">
    <property type="taxonomic scope" value="Eukaryota"/>
</dbReference>
<dbReference type="GeneTree" id="ENSGT00940000153527"/>
<dbReference type="Proteomes" id="UP000233100">
    <property type="component" value="Chromosome 4"/>
</dbReference>
<dbReference type="Bgee" id="ENSMFAG00000037244">
    <property type="expression patterns" value="Expressed in frontal cortex and 2 other cell types or tissues"/>
</dbReference>
<dbReference type="GO" id="GO:0009897">
    <property type="term" value="C:external side of plasma membrane"/>
    <property type="evidence" value="ECO:0007669"/>
    <property type="project" value="TreeGrafter"/>
</dbReference>
<dbReference type="GO" id="GO:0005102">
    <property type="term" value="F:signaling receptor binding"/>
    <property type="evidence" value="ECO:0007669"/>
    <property type="project" value="TreeGrafter"/>
</dbReference>
<dbReference type="GO" id="GO:0007155">
    <property type="term" value="P:cell adhesion"/>
    <property type="evidence" value="ECO:0007669"/>
    <property type="project" value="UniProtKB-KW"/>
</dbReference>
<dbReference type="GO" id="GO:0001817">
    <property type="term" value="P:regulation of cytokine production"/>
    <property type="evidence" value="ECO:0007669"/>
    <property type="project" value="TreeGrafter"/>
</dbReference>
<dbReference type="GO" id="GO:0050852">
    <property type="term" value="P:T cell receptor signaling pathway"/>
    <property type="evidence" value="ECO:0007669"/>
    <property type="project" value="TreeGrafter"/>
</dbReference>
<dbReference type="CDD" id="cd05713">
    <property type="entry name" value="IgV_MOG_like"/>
    <property type="match status" value="1"/>
</dbReference>
<dbReference type="FunFam" id="2.60.40.10:FF:000183">
    <property type="entry name" value="Myelin-oligodendrocyte glycoprotein"/>
    <property type="match status" value="1"/>
</dbReference>
<dbReference type="Gene3D" id="2.60.40.10">
    <property type="entry name" value="Immunoglobulins"/>
    <property type="match status" value="1"/>
</dbReference>
<dbReference type="InterPro" id="IPR007110">
    <property type="entry name" value="Ig-like_dom"/>
</dbReference>
<dbReference type="InterPro" id="IPR036179">
    <property type="entry name" value="Ig-like_dom_sf"/>
</dbReference>
<dbReference type="InterPro" id="IPR013783">
    <property type="entry name" value="Ig-like_fold"/>
</dbReference>
<dbReference type="InterPro" id="IPR003599">
    <property type="entry name" value="Ig_sub"/>
</dbReference>
<dbReference type="InterPro" id="IPR013106">
    <property type="entry name" value="Ig_V-set"/>
</dbReference>
<dbReference type="InterPro" id="IPR050504">
    <property type="entry name" value="IgSF_BTN/MOG"/>
</dbReference>
<dbReference type="InterPro" id="IPR016663">
    <property type="entry name" value="Myelin-oligodendrocyte_glycop"/>
</dbReference>
<dbReference type="PANTHER" id="PTHR24100">
    <property type="entry name" value="BUTYROPHILIN"/>
    <property type="match status" value="1"/>
</dbReference>
<dbReference type="PANTHER" id="PTHR24100:SF71">
    <property type="entry name" value="MYELIN-OLIGODENDROCYTE GLYCOPROTEIN"/>
    <property type="match status" value="1"/>
</dbReference>
<dbReference type="Pfam" id="PF07686">
    <property type="entry name" value="V-set"/>
    <property type="match status" value="1"/>
</dbReference>
<dbReference type="PIRSF" id="PIRSF016522">
    <property type="entry name" value="MOG"/>
    <property type="match status" value="1"/>
</dbReference>
<dbReference type="SMART" id="SM00409">
    <property type="entry name" value="IG"/>
    <property type="match status" value="1"/>
</dbReference>
<dbReference type="SMART" id="SM00406">
    <property type="entry name" value="IGv"/>
    <property type="match status" value="1"/>
</dbReference>
<dbReference type="SUPFAM" id="SSF48726">
    <property type="entry name" value="Immunoglobulin"/>
    <property type="match status" value="1"/>
</dbReference>
<dbReference type="PROSITE" id="PS50835">
    <property type="entry name" value="IG_LIKE"/>
    <property type="match status" value="1"/>
</dbReference>
<reference key="1">
    <citation type="journal article" date="2006" name="J. Neurochem.">
        <title>Complex alternative splicing of the myelin oligodendrocyte glycoprotein gene is unique to human and non-human primates.</title>
        <authorList>
            <person name="Delarasse C."/>
            <person name="Della Gaspera B."/>
            <person name="Lu C.W."/>
            <person name="Lachapelle F."/>
            <person name="Gelot A."/>
            <person name="Rodriguez D."/>
            <person name="Dautigny A."/>
            <person name="Genain C."/>
            <person name="Pham-Dinh D."/>
        </authorList>
    </citation>
    <scope>NUCLEOTIDE SEQUENCE [MRNA] (ISOFORMS 1 AND 2)</scope>
</reference>
<reference key="2">
    <citation type="submission" date="2001-02" db="EMBL/GenBank/DDBJ databases">
        <title>Isolation of full-length cDNA clones from macaque brain cDNA libraries.</title>
        <authorList>
            <person name="Osada N."/>
            <person name="Hida M."/>
            <person name="Kusuda J."/>
            <person name="Tanuma R."/>
            <person name="Iseki K."/>
            <person name="Hirai M."/>
            <person name="Terao K."/>
            <person name="Suzuki Y."/>
            <person name="Sugano S."/>
            <person name="Hashimoto K."/>
        </authorList>
    </citation>
    <scope>NUCLEOTIDE SEQUENCE [LARGE SCALE MRNA] (ISOFORM 1)</scope>
    <source>
        <tissue>Frontal cortex</tissue>
    </source>
</reference>
<gene>
    <name type="primary">MOG</name>
    <name type="ORF">QflA-14648</name>
</gene>
<evidence type="ECO:0000250" key="1"/>
<evidence type="ECO:0000255" key="2"/>
<evidence type="ECO:0000255" key="3">
    <source>
        <dbReference type="PROSITE-ProRule" id="PRU00114"/>
    </source>
</evidence>
<evidence type="ECO:0000303" key="4">
    <source>
    </source>
</evidence>
<evidence type="ECO:0000305" key="5"/>
<name>MOG_MACFA</name>
<protein>
    <recommendedName>
        <fullName>Myelin-oligodendrocyte glycoprotein</fullName>
    </recommendedName>
</protein>
<accession>Q9BGS7</accession>
<accession>Q29ZP2</accession>
<accession>Q7YRD9</accession>
<organism>
    <name type="scientific">Macaca fascicularis</name>
    <name type="common">Crab-eating macaque</name>
    <name type="synonym">Cynomolgus monkey</name>
    <dbReference type="NCBI Taxonomy" id="9541"/>
    <lineage>
        <taxon>Eukaryota</taxon>
        <taxon>Metazoa</taxon>
        <taxon>Chordata</taxon>
        <taxon>Craniata</taxon>
        <taxon>Vertebrata</taxon>
        <taxon>Euteleostomi</taxon>
        <taxon>Mammalia</taxon>
        <taxon>Eutheria</taxon>
        <taxon>Euarchontoglires</taxon>
        <taxon>Primates</taxon>
        <taxon>Haplorrhini</taxon>
        <taxon>Catarrhini</taxon>
        <taxon>Cercopithecidae</taxon>
        <taxon>Cercopithecinae</taxon>
        <taxon>Macaca</taxon>
    </lineage>
</organism>
<proteinExistence type="evidence at transcript level"/>